<comment type="function">
    <text evidence="6 10 15">Reversibly catalyzes the transfer of phosphate between ATP and various phosphogens (e.g. creatine phosphate) (PubMed:20026305, PubMed:8525081). Creatine kinase isoenzymes play a central role in energy transduction in tissues with large, fluctuating energy demands, such as skeletal muscle, heart, brain and spermatozoa (Probable).</text>
</comment>
<comment type="catalytic activity">
    <reaction evidence="5 6 10">
        <text>creatine + ATP = N-phosphocreatine + ADP + H(+)</text>
        <dbReference type="Rhea" id="RHEA:17157"/>
        <dbReference type="ChEBI" id="CHEBI:15378"/>
        <dbReference type="ChEBI" id="CHEBI:30616"/>
        <dbReference type="ChEBI" id="CHEBI:57947"/>
        <dbReference type="ChEBI" id="CHEBI:58092"/>
        <dbReference type="ChEBI" id="CHEBI:456216"/>
        <dbReference type="EC" id="2.7.3.2"/>
    </reaction>
    <physiologicalReaction direction="left-to-right" evidence="6 10">
        <dbReference type="Rhea" id="RHEA:17158"/>
    </physiologicalReaction>
</comment>
<comment type="subunit">
    <text evidence="1">Dimer of identical or non-identical chains, which can be either B (brain type) or M (muscle type). With MM being the major form in skeletal muscle and myocardium, MB existing in myocardium, and BB existing in many tissues, especially brain.</text>
</comment>
<comment type="subcellular location">
    <subcellularLocation>
        <location evidence="2">Cytoplasm</location>
        <location evidence="2">Cytosol</location>
    </subcellularLocation>
    <subcellularLocation>
        <location evidence="2">Mitochondrion</location>
    </subcellularLocation>
    <subcellularLocation>
        <location evidence="1">Cell membrane</location>
    </subcellularLocation>
</comment>
<comment type="alternative products">
    <event type="alternative splicing"/>
    <isoform>
        <id>P05122-1</id>
        <name evidence="12 13">Bb-CK-1</name>
        <sequence type="displayed"/>
    </isoform>
    <isoform>
        <id>P05122-2</id>
        <name evidence="12">Ba-CK</name>
        <sequence type="described" ref="VSP_002814"/>
    </isoform>
    <isoform>
        <id>P05122-3</id>
        <name evidence="11">Bb-CK-2</name>
        <sequence type="described" ref="VSP_010768"/>
    </isoform>
    <isoform>
        <id>P05122-4</id>
        <name evidence="11">Bb-CK-3</name>
        <sequence type="described" ref="VSP_010769"/>
    </isoform>
    <isoform>
        <id>P05122-5</id>
        <name evidence="11">Bb-CK-4</name>
        <sequence type="described" ref="VSP_010770"/>
    </isoform>
</comment>
<comment type="tissue specificity">
    <text evidence="9">Expressed in almost all tissues and found enriched in various region of the brain, retina, heart, gizzard, gut and sperm.</text>
</comment>
<comment type="PTM">
    <text evidence="7">Ba-CK and Bb-CK are phosphorylated.</text>
</comment>
<comment type="PTM">
    <text evidence="8">The N-terminus of BA-CK is blocked.</text>
</comment>
<comment type="similarity">
    <text evidence="3 4">Belongs to the ATP:guanido phosphotransferase family.</text>
</comment>
<gene>
    <name evidence="14" type="primary">CKB</name>
</gene>
<accession>P05122</accession>
<accession>Q92061</accession>
<dbReference type="EC" id="2.7.3.2" evidence="6 10"/>
<dbReference type="EMBL" id="X03509">
    <property type="protein sequence ID" value="CAA27221.1"/>
    <property type="molecule type" value="mRNA"/>
</dbReference>
<dbReference type="EMBL" id="M33714">
    <property type="protein sequence ID" value="AAA48613.1"/>
    <property type="molecule type" value="Genomic_DNA"/>
</dbReference>
<dbReference type="EMBL" id="M33711">
    <property type="protein sequence ID" value="AAA48613.1"/>
    <property type="status" value="JOINED"/>
    <property type="molecule type" value="Genomic_DNA"/>
</dbReference>
<dbReference type="EMBL" id="M33712">
    <property type="protein sequence ID" value="AAA48613.1"/>
    <property type="status" value="JOINED"/>
    <property type="molecule type" value="Genomic_DNA"/>
</dbReference>
<dbReference type="EMBL" id="M33713">
    <property type="protein sequence ID" value="AAA48613.1"/>
    <property type="status" value="JOINED"/>
    <property type="molecule type" value="Genomic_DNA"/>
</dbReference>
<dbReference type="EMBL" id="M33714">
    <property type="protein sequence ID" value="AAA48614.1"/>
    <property type="molecule type" value="Genomic_DNA"/>
</dbReference>
<dbReference type="EMBL" id="M33711">
    <property type="protein sequence ID" value="AAA48614.1"/>
    <property type="status" value="JOINED"/>
    <property type="molecule type" value="Genomic_DNA"/>
</dbReference>
<dbReference type="EMBL" id="M33712">
    <property type="protein sequence ID" value="AAA48614.1"/>
    <property type="status" value="JOINED"/>
    <property type="molecule type" value="Genomic_DNA"/>
</dbReference>
<dbReference type="EMBL" id="M33713">
    <property type="protein sequence ID" value="AAA48614.1"/>
    <property type="status" value="JOINED"/>
    <property type="molecule type" value="Genomic_DNA"/>
</dbReference>
<dbReference type="EMBL" id="M35381">
    <property type="protein sequence ID" value="AAA48687.1"/>
    <property type="molecule type" value="Genomic_DNA"/>
</dbReference>
<dbReference type="PIR" id="A37059">
    <property type="entry name" value="A24793"/>
</dbReference>
<dbReference type="RefSeq" id="NP_990641.1">
    <molecule id="P05122-1"/>
    <property type="nucleotide sequence ID" value="NM_205310.2"/>
</dbReference>
<dbReference type="RefSeq" id="XP_015142790.1">
    <molecule id="P05122-2"/>
    <property type="nucleotide sequence ID" value="XM_015287304.4"/>
</dbReference>
<dbReference type="RefSeq" id="XP_046773860.1">
    <molecule id="P05122-2"/>
    <property type="nucleotide sequence ID" value="XM_046917904.1"/>
</dbReference>
<dbReference type="RefSeq" id="XP_046773861.1">
    <molecule id="P05122-2"/>
    <property type="nucleotide sequence ID" value="XM_046917905.1"/>
</dbReference>
<dbReference type="RefSeq" id="XP_046797438.1">
    <molecule id="P05122-2"/>
    <property type="nucleotide sequence ID" value="XM_046941482.1"/>
</dbReference>
<dbReference type="PDB" id="1QH4">
    <property type="method" value="X-ray"/>
    <property type="resolution" value="1.41 A"/>
    <property type="chains" value="A/B/C/D=2-381"/>
</dbReference>
<dbReference type="PDBsum" id="1QH4"/>
<dbReference type="SMR" id="P05122"/>
<dbReference type="BioGRID" id="676508">
    <property type="interactions" value="1"/>
</dbReference>
<dbReference type="FunCoup" id="P05122">
    <property type="interactions" value="1349"/>
</dbReference>
<dbReference type="IntAct" id="P05122">
    <property type="interactions" value="1"/>
</dbReference>
<dbReference type="STRING" id="9031.ENSGALP00000047068"/>
<dbReference type="iPTMnet" id="P05122"/>
<dbReference type="PaxDb" id="9031-ENSGALP00000018742"/>
<dbReference type="Ensembl" id="ENSGALT00010038056.1">
    <molecule id="P05122-2"/>
    <property type="protein sequence ID" value="ENSGALP00010021961.1"/>
    <property type="gene ID" value="ENSGALG00010015804.1"/>
</dbReference>
<dbReference type="GeneID" id="396248"/>
<dbReference type="KEGG" id="gga:396248"/>
<dbReference type="CTD" id="1152"/>
<dbReference type="VEuPathDB" id="HostDB:geneid_396248"/>
<dbReference type="eggNOG" id="KOG3581">
    <property type="taxonomic scope" value="Eukaryota"/>
</dbReference>
<dbReference type="GeneTree" id="ENSGT00950000182772"/>
<dbReference type="InParanoid" id="P05122"/>
<dbReference type="OMA" id="ISSDWPY"/>
<dbReference type="OrthoDB" id="430219at2759"/>
<dbReference type="PhylomeDB" id="P05122"/>
<dbReference type="Reactome" id="R-GGA-71288">
    <property type="pathway name" value="Creatine metabolism"/>
</dbReference>
<dbReference type="Reactome" id="R-GGA-9696264">
    <property type="pathway name" value="RND3 GTPase cycle"/>
</dbReference>
<dbReference type="EvolutionaryTrace" id="P05122"/>
<dbReference type="PRO" id="PR:P05122"/>
<dbReference type="Proteomes" id="UP000000539">
    <property type="component" value="Chromosome 5"/>
</dbReference>
<dbReference type="Bgee" id="ENSGALG00000011511">
    <property type="expression patterns" value="Expressed in testis and 13 other cell types or tissues"/>
</dbReference>
<dbReference type="GO" id="GO:0005829">
    <property type="term" value="C:cytosol"/>
    <property type="evidence" value="ECO:0000304"/>
    <property type="project" value="AgBase"/>
</dbReference>
<dbReference type="GO" id="GO:0065010">
    <property type="term" value="C:extracellular membrane-bounded organelle"/>
    <property type="evidence" value="ECO:0000314"/>
    <property type="project" value="AgBase"/>
</dbReference>
<dbReference type="GO" id="GO:0005615">
    <property type="term" value="C:extracellular space"/>
    <property type="evidence" value="ECO:0000314"/>
    <property type="project" value="AgBase"/>
</dbReference>
<dbReference type="GO" id="GO:0005739">
    <property type="term" value="C:mitochondrion"/>
    <property type="evidence" value="ECO:0007669"/>
    <property type="project" value="UniProtKB-SubCell"/>
</dbReference>
<dbReference type="GO" id="GO:0005886">
    <property type="term" value="C:plasma membrane"/>
    <property type="evidence" value="ECO:0007669"/>
    <property type="project" value="UniProtKB-SubCell"/>
</dbReference>
<dbReference type="GO" id="GO:0005524">
    <property type="term" value="F:ATP binding"/>
    <property type="evidence" value="ECO:0007669"/>
    <property type="project" value="UniProtKB-KW"/>
</dbReference>
<dbReference type="GO" id="GO:0004111">
    <property type="term" value="F:creatine kinase activity"/>
    <property type="evidence" value="ECO:0000314"/>
    <property type="project" value="AgBase"/>
</dbReference>
<dbReference type="GO" id="GO:0006754">
    <property type="term" value="P:ATP biosynthetic process"/>
    <property type="evidence" value="ECO:0000314"/>
    <property type="project" value="AgBase"/>
</dbReference>
<dbReference type="GO" id="GO:0046314">
    <property type="term" value="P:phosphocreatine biosynthetic process"/>
    <property type="evidence" value="ECO:0000318"/>
    <property type="project" value="GO_Central"/>
</dbReference>
<dbReference type="CDD" id="cd00716">
    <property type="entry name" value="creatine_kinase_like"/>
    <property type="match status" value="1"/>
</dbReference>
<dbReference type="FunFam" id="3.30.590.10:FF:000026">
    <property type="entry name" value="Creatine kinase B-type"/>
    <property type="match status" value="1"/>
</dbReference>
<dbReference type="FunFam" id="1.10.135.10:FF:000001">
    <property type="entry name" value="Creatine kinase M-type"/>
    <property type="match status" value="1"/>
</dbReference>
<dbReference type="Gene3D" id="1.10.135.10">
    <property type="entry name" value="ATP:guanido phosphotransferase, N-terminal domain"/>
    <property type="match status" value="1"/>
</dbReference>
<dbReference type="Gene3D" id="3.30.590.10">
    <property type="entry name" value="Glutamine synthetase/guanido kinase, catalytic domain"/>
    <property type="match status" value="1"/>
</dbReference>
<dbReference type="InterPro" id="IPR000749">
    <property type="entry name" value="ATP-guanido_PTrfase"/>
</dbReference>
<dbReference type="InterPro" id="IPR022415">
    <property type="entry name" value="ATP-guanido_PTrfase_AS"/>
</dbReference>
<dbReference type="InterPro" id="IPR022414">
    <property type="entry name" value="ATP-guanido_PTrfase_cat"/>
</dbReference>
<dbReference type="InterPro" id="IPR022413">
    <property type="entry name" value="ATP-guanido_PTrfase_N"/>
</dbReference>
<dbReference type="InterPro" id="IPR036802">
    <property type="entry name" value="ATP-guanido_PTrfase_N_sf"/>
</dbReference>
<dbReference type="InterPro" id="IPR014746">
    <property type="entry name" value="Gln_synth/guanido_kin_cat_dom"/>
</dbReference>
<dbReference type="PANTHER" id="PTHR11547">
    <property type="entry name" value="ARGININE OR CREATINE KINASE"/>
    <property type="match status" value="1"/>
</dbReference>
<dbReference type="PANTHER" id="PTHR11547:SF23">
    <property type="entry name" value="CREATINE KINASE B-TYPE"/>
    <property type="match status" value="1"/>
</dbReference>
<dbReference type="Pfam" id="PF00217">
    <property type="entry name" value="ATP-gua_Ptrans"/>
    <property type="match status" value="1"/>
</dbReference>
<dbReference type="Pfam" id="PF02807">
    <property type="entry name" value="ATP-gua_PtransN"/>
    <property type="match status" value="1"/>
</dbReference>
<dbReference type="SUPFAM" id="SSF55931">
    <property type="entry name" value="Glutamine synthetase/guanido kinase"/>
    <property type="match status" value="1"/>
</dbReference>
<dbReference type="SUPFAM" id="SSF48034">
    <property type="entry name" value="Guanido kinase N-terminal domain"/>
    <property type="match status" value="1"/>
</dbReference>
<dbReference type="PROSITE" id="PS00112">
    <property type="entry name" value="PHOSPHAGEN_KINASE"/>
    <property type="match status" value="1"/>
</dbReference>
<dbReference type="PROSITE" id="PS51510">
    <property type="entry name" value="PHOSPHAGEN_KINASE_C"/>
    <property type="match status" value="1"/>
</dbReference>
<dbReference type="PROSITE" id="PS51509">
    <property type="entry name" value="PHOSPHAGEN_KINASE_N"/>
    <property type="match status" value="1"/>
</dbReference>
<name>KCRB_CHICK</name>
<evidence type="ECO:0000250" key="1">
    <source>
        <dbReference type="UniProtKB" id="P12277"/>
    </source>
</evidence>
<evidence type="ECO:0000250" key="2">
    <source>
        <dbReference type="UniProtKB" id="Q04447"/>
    </source>
</evidence>
<evidence type="ECO:0000255" key="3">
    <source>
        <dbReference type="PROSITE-ProRule" id="PRU00842"/>
    </source>
</evidence>
<evidence type="ECO:0000255" key="4">
    <source>
        <dbReference type="PROSITE-ProRule" id="PRU00843"/>
    </source>
</evidence>
<evidence type="ECO:0000255" key="5">
    <source>
        <dbReference type="PROSITE-ProRule" id="PRU10029"/>
    </source>
</evidence>
<evidence type="ECO:0000269" key="6">
    <source>
    </source>
</evidence>
<evidence type="ECO:0000269" key="7">
    <source>
    </source>
</evidence>
<evidence type="ECO:0000269" key="8">
    <source>
    </source>
</evidence>
<evidence type="ECO:0000269" key="9">
    <source>
    </source>
</evidence>
<evidence type="ECO:0000269" key="10">
    <source>
    </source>
</evidence>
<evidence type="ECO:0000303" key="11">
    <source>
    </source>
</evidence>
<evidence type="ECO:0000303" key="12">
    <source>
    </source>
</evidence>
<evidence type="ECO:0000303" key="13">
    <source>
    </source>
</evidence>
<evidence type="ECO:0000303" key="14">
    <source>
    </source>
</evidence>
<evidence type="ECO:0000305" key="15"/>
<evidence type="ECO:0000305" key="16">
    <source>
    </source>
</evidence>
<evidence type="ECO:0007829" key="17">
    <source>
        <dbReference type="PDB" id="1QH4"/>
    </source>
</evidence>
<keyword id="KW-0002">3D-structure</keyword>
<keyword id="KW-0025">Alternative splicing</keyword>
<keyword id="KW-0067">ATP-binding</keyword>
<keyword id="KW-1003">Cell membrane</keyword>
<keyword id="KW-0963">Cytoplasm</keyword>
<keyword id="KW-0903">Direct protein sequencing</keyword>
<keyword id="KW-0418">Kinase</keyword>
<keyword id="KW-0472">Membrane</keyword>
<keyword id="KW-0496">Mitochondrion</keyword>
<keyword id="KW-0547">Nucleotide-binding</keyword>
<keyword id="KW-0597">Phosphoprotein</keyword>
<keyword id="KW-1185">Reference proteome</keyword>
<keyword id="KW-0808">Transferase</keyword>
<sequence>MPFSNSHNLLKMKYSVDDEYPDLSVHNNHMAKVLTLDLYKKLRDRQTSSGFTLDDVIQTGVDNPGHPFIMTVGCVAGDEESYEVFKELFDPVIEDRHGGYKPTDEHKTDLNADNLQGGDDLDPNYVLSSRVRTGRSIRGFCLPPHCSRGERRAIEKLSVEALGSLGGDLKGKYYALRNMTDAEQQQLIDDHFLFDKPVSPLLLASGMARDWPDARGIWHNDNKTFLVWINEEDHLRVISMQKGGNMKEVFTRFCTGLTQIETLFKSKNYEFMWNPHLGYILTCPSNLGTGLRAGVHIKLPNLGKHEKFGEVLKRLRLQKRGTGGVDTAAVGGVFDVSNADRLGFSEVELVQMVVDGVKLLIEMEKRLEKGQSIDDLMPAQK</sequence>
<organism>
    <name type="scientific">Gallus gallus</name>
    <name type="common">Chicken</name>
    <dbReference type="NCBI Taxonomy" id="9031"/>
    <lineage>
        <taxon>Eukaryota</taxon>
        <taxon>Metazoa</taxon>
        <taxon>Chordata</taxon>
        <taxon>Craniata</taxon>
        <taxon>Vertebrata</taxon>
        <taxon>Euteleostomi</taxon>
        <taxon>Archelosauria</taxon>
        <taxon>Archosauria</taxon>
        <taxon>Dinosauria</taxon>
        <taxon>Saurischia</taxon>
        <taxon>Theropoda</taxon>
        <taxon>Coelurosauria</taxon>
        <taxon>Aves</taxon>
        <taxon>Neognathae</taxon>
        <taxon>Galloanserae</taxon>
        <taxon>Galliformes</taxon>
        <taxon>Phasianidae</taxon>
        <taxon>Phasianinae</taxon>
        <taxon>Gallus</taxon>
    </lineage>
</organism>
<reference key="1">
    <citation type="journal article" date="1986" name="Nucleic Acids Res.">
        <title>The primary structure of chicken B-creatine kinase and evidence for heterogeneity of its mRNA.</title>
        <authorList>
            <person name="Hossle J.P."/>
            <person name="Rosenberg U.B."/>
            <person name="Schaefer B.W."/>
            <person name="Eppenberger H.M."/>
            <person name="Perriard J.-C."/>
        </authorList>
    </citation>
    <scope>NUCLEOTIDE SEQUENCE [MRNA] (ISOFORM BB-CK-1)</scope>
    <scope>TISSUE SPECIFICITY</scope>
</reference>
<reference key="2">
    <citation type="journal article" date="1990" name="J. Biol. Chem.">
        <title>A unique chicken B-creatine kinase gene gives rise to two B-creatine kinase isoproteins with distinct N termini by alternative splicing.</title>
        <authorList>
            <person name="Wirz T."/>
            <person name="Braendle U."/>
            <person name="Soldati T."/>
            <person name="Hossle J.P."/>
            <person name="Perriard J.-C."/>
        </authorList>
    </citation>
    <scope>NUCLEOTIDE SEQUENCE [GENOMIC DNA] (ISOFORMS BA-CK AND BB-CK-1)</scope>
    <source>
        <strain>White leghorn</strain>
        <tissue>Brain</tissue>
    </source>
</reference>
<reference key="3">
    <citation type="journal article" date="1985" name="Dev. Biol.">
        <title>Accumulation of creatine kinase mRNA during myogenesis: molecular cloning of a B-creatine kinase cDNA.</title>
        <authorList>
            <person name="Kwiatkowski R.W."/>
            <person name="Ehrismann R."/>
            <person name="Schweinfest C.W."/>
            <person name="Dottin R.P."/>
        </authorList>
    </citation>
    <scope>NUCLEOTIDE SEQUENCE [GENOMIC DNA] OF 317-381</scope>
    <source>
        <tissue>Brain</tissue>
    </source>
</reference>
<reference key="4">
    <citation type="journal article" date="1995" name="Biochim. Biophys. Acta">
        <title>Autophosphorylation of creatine kinase: characterization and identification of a specifically phosphorylated peptide.</title>
        <authorList>
            <person name="Hemmer W."/>
            <person name="Furter-Graves E.M."/>
            <person name="Frank G."/>
            <person name="Wallimann T."/>
            <person name="Furter R."/>
        </authorList>
    </citation>
    <scope>PROTEIN SEQUENCE OF 2-9; 12-20; 266-277 AND 320-329</scope>
    <scope>PHOSPHORYLATION AT THR-282; SER-285 AND THR-289</scope>
</reference>
<reference key="5">
    <citation type="journal article" date="1990" name="J. Biol. Chem.">
        <title>Alternative ribosomal initiation gives rise to chicken brain-type creatine kinase isoproteins with heterogeneous amino termini.</title>
        <authorList>
            <person name="Soldati T."/>
            <person name="Schaefer B.W."/>
            <person name="Perriard J.-C."/>
        </authorList>
    </citation>
    <scope>ALTERNATIVE SPLICING (ISOFORMS BA-CK-2; BA-CK-3 AND BA-CK-4)</scope>
    <scope>PHOSPHORYLATION</scope>
</reference>
<reference key="6">
    <citation type="journal article" date="1995" name="Res. Vet. Sci.">
        <title>Creatine kinase isoenzyme profiles in the plasma of the domestic fowl (Gallus domesticus): effects of acute heat stress.</title>
        <authorList>
            <person name="Mitchell M.A."/>
            <person name="Sandercock D.A."/>
        </authorList>
    </citation>
    <scope>FUNCTION</scope>
    <scope>CATALYTIC ACTIVITY</scope>
</reference>
<reference key="7">
    <citation type="journal article" date="2010" name="Biochem. Biophys. Res. Commun.">
        <title>Active creatine kinase is present in matrix vesicles isolated from femurs of chicken embryo: Implications for bone mineralization.</title>
        <authorList>
            <person name="Sekrecka-Belniak A."/>
            <person name="Balcerzak M."/>
            <person name="Buchet R."/>
            <person name="Pikula S."/>
        </authorList>
    </citation>
    <scope>FUNCTION</scope>
    <scope>CATALYTIC ACTIVITY</scope>
</reference>
<reference key="8">
    <citation type="journal article" date="1999" name="Protein Sci.">
        <title>Crystal structure of brain-type creatine kinase at 1.41-A resolution.</title>
        <authorList>
            <person name="Eder M."/>
            <person name="Schlattner U."/>
            <person name="Becker A."/>
            <person name="Wallimann T."/>
            <person name="Kabsch W."/>
            <person name="Fritz-Wolf K."/>
        </authorList>
    </citation>
    <scope>X-RAY CRYSTALLOGRAPHY (1.41 ANGSTROMS)</scope>
</reference>
<feature type="chain" id="PRO_0000211971" description="Creatine kinase B-type">
    <location>
        <begin position="1"/>
        <end position="381"/>
    </location>
</feature>
<feature type="domain" description="Phosphagen kinase N-terminal" evidence="3">
    <location>
        <begin position="11"/>
        <end position="98"/>
    </location>
</feature>
<feature type="domain" description="Phosphagen kinase C-terminal" evidence="4">
    <location>
        <begin position="125"/>
        <end position="367"/>
    </location>
</feature>
<feature type="binding site" evidence="1">
    <location>
        <position position="72"/>
    </location>
    <ligand>
        <name>creatine</name>
        <dbReference type="ChEBI" id="CHEBI:57947"/>
    </ligand>
</feature>
<feature type="binding site" evidence="4">
    <location>
        <begin position="128"/>
        <end position="132"/>
    </location>
    <ligand>
        <name>ATP</name>
        <dbReference type="ChEBI" id="CHEBI:30616"/>
    </ligand>
</feature>
<feature type="binding site" evidence="4">
    <location>
        <position position="130"/>
    </location>
    <ligand>
        <name>ATP</name>
        <dbReference type="ChEBI" id="CHEBI:30616"/>
    </ligand>
</feature>
<feature type="binding site" evidence="4">
    <location>
        <position position="132"/>
    </location>
    <ligand>
        <name>ATP</name>
        <dbReference type="ChEBI" id="CHEBI:30616"/>
    </ligand>
</feature>
<feature type="binding site" evidence="4">
    <location>
        <position position="191"/>
    </location>
    <ligand>
        <name>ATP</name>
        <dbReference type="ChEBI" id="CHEBI:30616"/>
    </ligand>
</feature>
<feature type="binding site" evidence="1">
    <location>
        <position position="232"/>
    </location>
    <ligand>
        <name>creatine</name>
        <dbReference type="ChEBI" id="CHEBI:57947"/>
    </ligand>
</feature>
<feature type="binding site" evidence="4">
    <location>
        <position position="236"/>
    </location>
    <ligand>
        <name>ATP</name>
        <dbReference type="ChEBI" id="CHEBI:30616"/>
    </ligand>
</feature>
<feature type="binding site" evidence="1">
    <location>
        <position position="285"/>
    </location>
    <ligand>
        <name>creatine</name>
        <dbReference type="ChEBI" id="CHEBI:57947"/>
    </ligand>
</feature>
<feature type="binding site" evidence="4">
    <location>
        <position position="292"/>
    </location>
    <ligand>
        <name>ATP</name>
        <dbReference type="ChEBI" id="CHEBI:30616"/>
    </ligand>
</feature>
<feature type="binding site" evidence="4">
    <location>
        <begin position="320"/>
        <end position="325"/>
    </location>
    <ligand>
        <name>ATP</name>
        <dbReference type="ChEBI" id="CHEBI:30616"/>
    </ligand>
</feature>
<feature type="binding site" evidence="4">
    <location>
        <position position="320"/>
    </location>
    <ligand>
        <name>ATP</name>
        <dbReference type="ChEBI" id="CHEBI:30616"/>
    </ligand>
</feature>
<feature type="binding site" evidence="4">
    <location>
        <position position="335"/>
    </location>
    <ligand>
        <name>ATP</name>
        <dbReference type="ChEBI" id="CHEBI:30616"/>
    </ligand>
</feature>
<feature type="modified residue" description="Phosphothreonine; by autocatalysis" evidence="16">
    <location>
        <position position="282"/>
    </location>
</feature>
<feature type="modified residue" description="Phosphoserine; by autocatalysis" evidence="16">
    <location>
        <position position="285"/>
    </location>
</feature>
<feature type="modified residue" description="Phosphothreonine; by autocatalysis" evidence="16">
    <location>
        <position position="289"/>
    </location>
</feature>
<feature type="splice variant" id="VSP_010770" description="In isoform Bb-CK-4." evidence="15">
    <location>
        <begin position="1"/>
        <end position="69"/>
    </location>
</feature>
<feature type="splice variant" id="VSP_002814" description="In isoform Ba-CK." evidence="15">
    <original>MPFSNSHNLLKMKYSVDDEYPDLSVHNNHMAKVLTLDLYKKLRDRQTSSGFTLDDVIQTGVDNPG</original>
    <variation>MAQLNNQRLPPEEEYPDLSTHNNHMAKVLTLDLYKKLRDRVTPSGFTLDDVIQTGVDNPG</variation>
    <location>
        <begin position="1"/>
        <end position="65"/>
    </location>
</feature>
<feature type="splice variant" id="VSP_010769" description="In isoform Bb-CK-3." evidence="15">
    <location>
        <begin position="1"/>
        <end position="29"/>
    </location>
</feature>
<feature type="splice variant" id="VSP_010768" description="In isoform Bb-CK-2." evidence="15">
    <location>
        <begin position="1"/>
        <end position="11"/>
    </location>
</feature>
<feature type="helix" evidence="17">
    <location>
        <begin position="6"/>
        <end position="13"/>
    </location>
</feature>
<feature type="helix" evidence="17">
    <location>
        <begin position="16"/>
        <end position="19"/>
    </location>
</feature>
<feature type="helix" evidence="17">
    <location>
        <begin position="29"/>
        <end position="33"/>
    </location>
</feature>
<feature type="helix" evidence="17">
    <location>
        <begin position="36"/>
        <end position="42"/>
    </location>
</feature>
<feature type="helix" evidence="17">
    <location>
        <begin position="53"/>
        <end position="62"/>
    </location>
</feature>
<feature type="strand" evidence="17">
    <location>
        <begin position="67"/>
        <end position="69"/>
    </location>
</feature>
<feature type="helix" evidence="17">
    <location>
        <begin position="81"/>
        <end position="84"/>
    </location>
</feature>
<feature type="helix" evidence="17">
    <location>
        <begin position="86"/>
        <end position="96"/>
    </location>
</feature>
<feature type="helix" evidence="17">
    <location>
        <begin position="112"/>
        <end position="114"/>
    </location>
</feature>
<feature type="turn" evidence="17">
    <location>
        <begin position="123"/>
        <end position="125"/>
    </location>
</feature>
<feature type="strand" evidence="17">
    <location>
        <begin position="126"/>
        <end position="135"/>
    </location>
</feature>
<feature type="turn" evidence="17">
    <location>
        <begin position="143"/>
        <end position="145"/>
    </location>
</feature>
<feature type="helix" evidence="17">
    <location>
        <begin position="148"/>
        <end position="162"/>
    </location>
</feature>
<feature type="helix" evidence="17">
    <location>
        <begin position="167"/>
        <end position="169"/>
    </location>
</feature>
<feature type="strand" evidence="17">
    <location>
        <begin position="171"/>
        <end position="175"/>
    </location>
</feature>
<feature type="helix" evidence="17">
    <location>
        <begin position="176"/>
        <end position="178"/>
    </location>
</feature>
<feature type="helix" evidence="17">
    <location>
        <begin position="181"/>
        <end position="189"/>
    </location>
</feature>
<feature type="helix" evidence="17">
    <location>
        <begin position="200"/>
        <end position="203"/>
    </location>
</feature>
<feature type="turn" evidence="17">
    <location>
        <begin position="204"/>
        <end position="214"/>
    </location>
</feature>
<feature type="strand" evidence="17">
    <location>
        <begin position="216"/>
        <end position="220"/>
    </location>
</feature>
<feature type="strand" evidence="17">
    <location>
        <begin position="223"/>
        <end position="244"/>
    </location>
</feature>
<feature type="helix" evidence="17">
    <location>
        <begin position="246"/>
        <end position="266"/>
    </location>
</feature>
<feature type="turn" evidence="17">
    <location>
        <begin position="275"/>
        <end position="277"/>
    </location>
</feature>
<feature type="helix" evidence="17">
    <location>
        <begin position="284"/>
        <end position="286"/>
    </location>
</feature>
<feature type="strand" evidence="17">
    <location>
        <begin position="292"/>
        <end position="298"/>
    </location>
</feature>
<feature type="helix" evidence="17">
    <location>
        <begin position="300"/>
        <end position="303"/>
    </location>
</feature>
<feature type="helix" evidence="17">
    <location>
        <begin position="308"/>
        <end position="315"/>
    </location>
</feature>
<feature type="strand" evidence="17">
    <location>
        <begin position="317"/>
        <end position="320"/>
    </location>
</feature>
<feature type="turn" evidence="17">
    <location>
        <begin position="329"/>
        <end position="332"/>
    </location>
</feature>
<feature type="strand" evidence="17">
    <location>
        <begin position="333"/>
        <end position="338"/>
    </location>
</feature>
<feature type="strand" evidence="17">
    <location>
        <begin position="342"/>
        <end position="344"/>
    </location>
</feature>
<feature type="helix" evidence="17">
    <location>
        <begin position="346"/>
        <end position="368"/>
    </location>
</feature>
<feature type="helix" evidence="17">
    <location>
        <begin position="374"/>
        <end position="376"/>
    </location>
</feature>
<proteinExistence type="evidence at protein level"/>
<protein>
    <recommendedName>
        <fullName evidence="14">Creatine kinase B-type</fullName>
        <ecNumber evidence="6 10">2.7.3.2</ecNumber>
    </recommendedName>
    <alternativeName>
        <fullName>B-CK</fullName>
    </alternativeName>
    <alternativeName>
        <fullName>Creatine kinase B chain</fullName>
    </alternativeName>
    <alternativeName>
        <fullName>Creatine phosphokinase M-type</fullName>
        <shortName>CPK-B</shortName>
    </alternativeName>
</protein>